<proteinExistence type="evidence at protein level"/>
<keyword id="KW-0002">3D-structure</keyword>
<keyword id="KW-0007">Acetylation</keyword>
<keyword id="KW-0024">Alternative initiation</keyword>
<keyword id="KW-0903">Direct protein sequencing</keyword>
<keyword id="KW-0378">Hydrolase</keyword>
<keyword id="KW-1185">Reference proteome</keyword>
<dbReference type="EC" id="3.6.1.7" evidence="5"/>
<dbReference type="EMBL" id="BC114901">
    <property type="protein sequence ID" value="AAI14902.1"/>
    <property type="molecule type" value="mRNA"/>
</dbReference>
<dbReference type="PIR" id="A61449">
    <property type="entry name" value="A61449"/>
</dbReference>
<dbReference type="RefSeq" id="NP_001039447.1">
    <molecule id="P41500-1"/>
    <property type="nucleotide sequence ID" value="NM_001045982.2"/>
</dbReference>
<dbReference type="RefSeq" id="XP_005212005.1">
    <molecule id="P41500-1"/>
    <property type="nucleotide sequence ID" value="XM_005211948.5"/>
</dbReference>
<dbReference type="PDB" id="2ACY">
    <property type="method" value="X-ray"/>
    <property type="resolution" value="1.80 A"/>
    <property type="chains" value="A=4-101"/>
</dbReference>
<dbReference type="PDBsum" id="2ACY"/>
<dbReference type="SMR" id="P41500"/>
<dbReference type="FunCoup" id="P41500">
    <property type="interactions" value="988"/>
</dbReference>
<dbReference type="STRING" id="9913.ENSBTAP00000018595"/>
<dbReference type="iPTMnet" id="P41500"/>
<dbReference type="PaxDb" id="9913-ENSBTAP00000018595"/>
<dbReference type="GeneID" id="507844"/>
<dbReference type="KEGG" id="bta:507844"/>
<dbReference type="CTD" id="97"/>
<dbReference type="VEuPathDB" id="HostDB:ENSBTAG00000013992"/>
<dbReference type="eggNOG" id="KOG3360">
    <property type="taxonomic scope" value="Eukaryota"/>
</dbReference>
<dbReference type="HOGENOM" id="CLU_141932_0_1_1"/>
<dbReference type="InParanoid" id="P41500"/>
<dbReference type="OMA" id="WVRNTSH"/>
<dbReference type="OrthoDB" id="7961613at2759"/>
<dbReference type="TreeFam" id="TF300288"/>
<dbReference type="SABIO-RK" id="P41500"/>
<dbReference type="EvolutionaryTrace" id="P41500"/>
<dbReference type="Proteomes" id="UP000009136">
    <property type="component" value="Chromosome 10"/>
</dbReference>
<dbReference type="Bgee" id="ENSBTAG00000013992">
    <property type="expression patterns" value="Expressed in semen and 106 other cell types or tissues"/>
</dbReference>
<dbReference type="GO" id="GO:0003998">
    <property type="term" value="F:acylphosphatase activity"/>
    <property type="evidence" value="ECO:0000318"/>
    <property type="project" value="GO_Central"/>
</dbReference>
<dbReference type="FunFam" id="3.30.70.100:FF:000011">
    <property type="entry name" value="Acylphosphatase"/>
    <property type="match status" value="1"/>
</dbReference>
<dbReference type="Gene3D" id="3.30.70.100">
    <property type="match status" value="1"/>
</dbReference>
<dbReference type="InterPro" id="IPR020456">
    <property type="entry name" value="Acylphosphatase"/>
</dbReference>
<dbReference type="InterPro" id="IPR001792">
    <property type="entry name" value="Acylphosphatase-like_dom"/>
</dbReference>
<dbReference type="InterPro" id="IPR036046">
    <property type="entry name" value="Acylphosphatase-like_dom_sf"/>
</dbReference>
<dbReference type="InterPro" id="IPR017968">
    <property type="entry name" value="Acylphosphatase_CS"/>
</dbReference>
<dbReference type="PANTHER" id="PTHR10029">
    <property type="entry name" value="ACYLPHOSPHATASE"/>
    <property type="match status" value="1"/>
</dbReference>
<dbReference type="PANTHER" id="PTHR10029:SF21">
    <property type="entry name" value="ACYLPHOSPHATASE-1"/>
    <property type="match status" value="1"/>
</dbReference>
<dbReference type="Pfam" id="PF00708">
    <property type="entry name" value="Acylphosphatase"/>
    <property type="match status" value="1"/>
</dbReference>
<dbReference type="PRINTS" id="PR00112">
    <property type="entry name" value="ACYLPHPHTASE"/>
</dbReference>
<dbReference type="SUPFAM" id="SSF54975">
    <property type="entry name" value="Acylphosphatase/BLUF domain-like"/>
    <property type="match status" value="1"/>
</dbReference>
<dbReference type="PROSITE" id="PS00150">
    <property type="entry name" value="ACYLPHOSPHATASE_1"/>
    <property type="match status" value="1"/>
</dbReference>
<dbReference type="PROSITE" id="PS00151">
    <property type="entry name" value="ACYLPHOSPHATASE_2"/>
    <property type="match status" value="1"/>
</dbReference>
<dbReference type="PROSITE" id="PS51160">
    <property type="entry name" value="ACYLPHOSPHATASE_3"/>
    <property type="match status" value="1"/>
</dbReference>
<name>ACYP1_BOVIN</name>
<sequence>MSMAEGDTLISVDYEIFGKVQGVFFRKYTQAEGKKLGLVGWVQNTDQGTVQGQLQGPASKVRHMQEWLETKGSPKSHIDRASFHNEKVIVKLDYTDFQIVK</sequence>
<organism>
    <name type="scientific">Bos taurus</name>
    <name type="common">Bovine</name>
    <dbReference type="NCBI Taxonomy" id="9913"/>
    <lineage>
        <taxon>Eukaryota</taxon>
        <taxon>Metazoa</taxon>
        <taxon>Chordata</taxon>
        <taxon>Craniata</taxon>
        <taxon>Vertebrata</taxon>
        <taxon>Euteleostomi</taxon>
        <taxon>Mammalia</taxon>
        <taxon>Eutheria</taxon>
        <taxon>Laurasiatheria</taxon>
        <taxon>Artiodactyla</taxon>
        <taxon>Ruminantia</taxon>
        <taxon>Pecora</taxon>
        <taxon>Bovidae</taxon>
        <taxon>Bovinae</taxon>
        <taxon>Bos</taxon>
    </lineage>
</organism>
<evidence type="ECO:0000255" key="1">
    <source>
        <dbReference type="PROSITE-ProRule" id="PRU00520"/>
    </source>
</evidence>
<evidence type="ECO:0000269" key="2">
    <source>
    </source>
</evidence>
<evidence type="ECO:0000269" key="3">
    <source>
    </source>
</evidence>
<evidence type="ECO:0000305" key="4"/>
<evidence type="ECO:0000305" key="5">
    <source>
    </source>
</evidence>
<evidence type="ECO:0007829" key="6">
    <source>
        <dbReference type="PDB" id="2ACY"/>
    </source>
</evidence>
<gene>
    <name type="primary">ACYP1</name>
    <name type="synonym">ACYPE</name>
</gene>
<protein>
    <recommendedName>
        <fullName>Acylphosphatase-1</fullName>
        <ecNumber evidence="5">3.6.1.7</ecNumber>
    </recommendedName>
    <alternativeName>
        <fullName>Acylphosphatase, erythrocyte/testis isozyme</fullName>
    </alternativeName>
    <alternativeName>
        <fullName>Acylphosphatase, organ-common type isozyme</fullName>
    </alternativeName>
    <alternativeName>
        <fullName>Acylphosphate phosphohydrolase 1</fullName>
    </alternativeName>
</protein>
<reference key="1">
    <citation type="submission" date="2006-04" db="EMBL/GenBank/DDBJ databases">
        <authorList>
            <consortium name="NIH - Mammalian Gene Collection (MGC) project"/>
        </authorList>
    </citation>
    <scope>NUCLEOTIDE SEQUENCE [LARGE SCALE MRNA] (ISOFORM ACY2)</scope>
    <source>
        <strain>Hereford</strain>
        <tissue>Fetal pons</tissue>
    </source>
</reference>
<reference key="2">
    <citation type="journal article" date="1993" name="Ital. J. Biochem.">
        <title>Purification, kinetic properties and primary structure of bovine erythrocyte acylphosphatase.</title>
        <authorList>
            <person name="Pazzagli L."/>
            <person name="Ikram U.K."/>
            <person name="Liguri G."/>
            <person name="Taddei N."/>
            <person name="Gentilini A."/>
            <person name="Cecchi C."/>
            <person name="Manao G."/>
            <person name="Cappugi G."/>
        </authorList>
    </citation>
    <scope>PROTEIN SEQUENCE OF 2-101 (ISOFORM ACY2)</scope>
    <scope>ACETYLATION AT SER-2</scope>
    <source>
        <tissue>Erythrocyte</tissue>
    </source>
</reference>
<reference key="3">
    <citation type="journal article" date="1993" name="J. Protein Chem.">
        <title>Bovine testis acylphosphatase: purification and amino acid sequence.</title>
        <authorList>
            <person name="Pazzagli L."/>
            <person name="Cappugi G."/>
            <person name="Camici G."/>
            <person name="Manao G."/>
            <person name="Ramponi G."/>
        </authorList>
    </citation>
    <scope>PROTEIN SEQUENCE OF 2-101</scope>
    <scope>PROTEIN SEQUENCE OF 4-101 (ISOFORM ACY1)</scope>
    <scope>ACETYLATION AT SER-2</scope>
    <scope>ACETYLATION AT ALA-2 (ISOFORM ACY1)</scope>
    <scope>CATALYTIC ACTIVITY</scope>
    <source>
        <tissue>Testis</tissue>
    </source>
</reference>
<reference key="4">
    <citation type="journal article" date="1997" name="Structure">
        <title>Crystal structure of common type acylphosphatase from bovine testis.</title>
        <authorList>
            <person name="Thunnissen M.M.G.M."/>
            <person name="Taddei N."/>
            <person name="Liguri G."/>
            <person name="Ramponi G."/>
            <person name="Nordlund P."/>
        </authorList>
    </citation>
    <scope>X-RAY CRYSTALLOGRAPHY (1.8 ANGSTROMS) OF 4-101 (ISOFORM ACY1)</scope>
    <source>
        <tissue>Testis</tissue>
    </source>
</reference>
<comment type="catalytic activity">
    <reaction evidence="5">
        <text>an acyl phosphate + H2O = a carboxylate + phosphate + H(+)</text>
        <dbReference type="Rhea" id="RHEA:14965"/>
        <dbReference type="ChEBI" id="CHEBI:15377"/>
        <dbReference type="ChEBI" id="CHEBI:15378"/>
        <dbReference type="ChEBI" id="CHEBI:29067"/>
        <dbReference type="ChEBI" id="CHEBI:43474"/>
        <dbReference type="ChEBI" id="CHEBI:59918"/>
        <dbReference type="EC" id="3.6.1.7"/>
    </reaction>
</comment>
<comment type="alternative products">
    <event type="alternative initiation"/>
    <isoform>
        <id>P41500-1</id>
        <name>ACY2</name>
        <sequence type="displayed"/>
    </isoform>
    <isoform>
        <id>P41500-2</id>
        <name>ACY1</name>
        <sequence type="described" ref="VSP_026023"/>
    </isoform>
    <text>It is uncertain whether isoform ACY1 is produced by alternative initiation or another biological event.</text>
</comment>
<comment type="tissue specificity">
    <text>Organ-common type isozyme is found in many different tissues.</text>
</comment>
<comment type="similarity">
    <text evidence="4">Belongs to the acylphosphatase family.</text>
</comment>
<accession>P41500</accession>
<accession>Q1RMH2</accession>
<feature type="initiator methionine" description="Removed" evidence="3">
    <location>
        <position position="1"/>
    </location>
</feature>
<feature type="chain" id="PRO_0000158534" description="Acylphosphatase-1">
    <location>
        <begin position="2"/>
        <end position="101"/>
    </location>
</feature>
<feature type="domain" description="Acylphosphatase-like" evidence="1">
    <location>
        <begin position="11"/>
        <end position="101"/>
    </location>
</feature>
<feature type="active site" evidence="1">
    <location>
        <position position="26"/>
    </location>
</feature>
<feature type="active site" evidence="1">
    <location>
        <position position="44"/>
    </location>
</feature>
<feature type="modified residue" description="N-acetylserine" evidence="3">
    <location>
        <position position="2"/>
    </location>
</feature>
<feature type="splice variant" id="VSP_026023" description="In isoform ACY1." evidence="4">
    <location>
        <begin position="1"/>
        <end position="2"/>
    </location>
</feature>
<feature type="strand" evidence="6">
    <location>
        <begin position="9"/>
        <end position="19"/>
    </location>
</feature>
<feature type="strand" evidence="6">
    <location>
        <begin position="21"/>
        <end position="24"/>
    </location>
</feature>
<feature type="helix" evidence="6">
    <location>
        <begin position="25"/>
        <end position="35"/>
    </location>
</feature>
<feature type="strand" evidence="6">
    <location>
        <begin position="39"/>
        <end position="44"/>
    </location>
</feature>
<feature type="strand" evidence="6">
    <location>
        <begin position="50"/>
        <end position="57"/>
    </location>
</feature>
<feature type="helix" evidence="6">
    <location>
        <begin position="58"/>
        <end position="70"/>
    </location>
</feature>
<feature type="strand" evidence="6">
    <location>
        <begin position="77"/>
        <end position="88"/>
    </location>
</feature>
<feature type="strand" evidence="6">
    <location>
        <begin position="95"/>
        <end position="100"/>
    </location>
</feature>
<feature type="initiator methionine" description="Removed" evidence="2">
    <location sequence="P41500-2">
        <position position="1"/>
    </location>
</feature>
<feature type="modified residue" description="N-acetylalanine" evidence="2">
    <location sequence="P41500-2">
        <position position="2"/>
    </location>
</feature>